<feature type="chain" id="PRO_0000452729" description="Acylalkylpyrone synthase csyB">
    <location>
        <begin position="1"/>
        <end position="397"/>
    </location>
</feature>
<feature type="active site" description="Nucleophile" evidence="3 9">
    <location>
        <position position="155"/>
    </location>
</feature>
<feature type="active site" evidence="9">
    <location>
        <position position="377"/>
    </location>
</feature>
<feature type="binding site" evidence="1">
    <location>
        <begin position="50"/>
        <end position="57"/>
    </location>
    <ligand>
        <name>CoA</name>
        <dbReference type="ChEBI" id="CHEBI:57287"/>
    </ligand>
</feature>
<feature type="binding site" evidence="9 14">
    <location>
        <position position="50"/>
    </location>
    <ligand>
        <name>CoA</name>
        <dbReference type="ChEBI" id="CHEBI:57287"/>
    </ligand>
</feature>
<feature type="binding site" evidence="1">
    <location>
        <begin position="214"/>
        <end position="215"/>
    </location>
    <ligand>
        <name>substrate</name>
    </ligand>
</feature>
<feature type="binding site" evidence="9 14">
    <location>
        <position position="267"/>
    </location>
    <ligand>
        <name>CoA</name>
        <dbReference type="ChEBI" id="CHEBI:57287"/>
    </ligand>
</feature>
<feature type="binding site" evidence="2">
    <location>
        <begin position="312"/>
        <end position="315"/>
    </location>
    <ligand>
        <name>CoA</name>
        <dbReference type="ChEBI" id="CHEBI:57287"/>
    </ligand>
</feature>
<feature type="binding site" evidence="9 14">
    <location>
        <position position="312"/>
    </location>
    <ligand>
        <name>CoA</name>
        <dbReference type="ChEBI" id="CHEBI:57287"/>
    </ligand>
</feature>
<feature type="binding site" evidence="9 14">
    <location>
        <position position="314"/>
    </location>
    <ligand>
        <name>CoA</name>
        <dbReference type="ChEBI" id="CHEBI:57287"/>
    </ligand>
</feature>
<feature type="binding site" evidence="9 14">
    <location>
        <position position="315"/>
    </location>
    <ligand>
        <name>CoA</name>
        <dbReference type="ChEBI" id="CHEBI:57287"/>
    </ligand>
</feature>
<feature type="mutagenesis site" description="Leads to almost complete loss of catalytic activity." evidence="9">
    <original>A</original>
    <variation>F</variation>
    <variation>V</variation>
    <location>
        <position position="265"/>
    </location>
</feature>
<feature type="mutagenesis site" description="Does not affect the catalytic activity." evidence="9">
    <original>I</original>
    <variation>F</variation>
    <location>
        <position position="375"/>
    </location>
</feature>
<feature type="mutagenesis site" description="Leads to complete loss of catalytic activity." evidence="9">
    <original>I</original>
    <variation>W</variation>
    <location>
        <position position="375"/>
    </location>
</feature>
<feature type="mutagenesis site" description="Leads to complete loss of catalytic activity." evidence="9">
    <original>H</original>
    <variation>F</variation>
    <variation>P</variation>
    <location>
        <position position="377"/>
    </location>
</feature>
<feature type="strand" evidence="17">
    <location>
        <begin position="15"/>
        <end position="24"/>
    </location>
</feature>
<feature type="strand" evidence="17">
    <location>
        <begin position="26"/>
        <end position="28"/>
    </location>
</feature>
<feature type="helix" evidence="17">
    <location>
        <begin position="31"/>
        <end position="41"/>
    </location>
</feature>
<feature type="helix" evidence="17">
    <location>
        <begin position="46"/>
        <end position="55"/>
    </location>
</feature>
<feature type="strand" evidence="17">
    <location>
        <begin position="61"/>
        <end position="67"/>
    </location>
</feature>
<feature type="helix" evidence="17">
    <location>
        <begin position="72"/>
        <end position="75"/>
    </location>
</feature>
<feature type="helix" evidence="17">
    <location>
        <begin position="82"/>
        <end position="108"/>
    </location>
</feature>
<feature type="helix" evidence="17">
    <location>
        <begin position="112"/>
        <end position="114"/>
    </location>
</feature>
<feature type="strand" evidence="17">
    <location>
        <begin position="117"/>
        <end position="121"/>
    </location>
</feature>
<feature type="helix" evidence="17">
    <location>
        <begin position="131"/>
        <end position="139"/>
    </location>
</feature>
<feature type="strand" evidence="17">
    <location>
        <begin position="146"/>
        <end position="150"/>
    </location>
</feature>
<feature type="helix" evidence="17">
    <location>
        <begin position="154"/>
        <end position="156"/>
    </location>
</feature>
<feature type="helix" evidence="17">
    <location>
        <begin position="157"/>
        <end position="175"/>
    </location>
</feature>
<feature type="strand" evidence="17">
    <location>
        <begin position="180"/>
        <end position="187"/>
    </location>
</feature>
<feature type="helix" evidence="17">
    <location>
        <begin position="189"/>
        <end position="192"/>
    </location>
</feature>
<feature type="helix" evidence="17">
    <location>
        <begin position="193"/>
        <end position="203"/>
    </location>
</feature>
<feature type="helix" evidence="17">
    <location>
        <begin position="209"/>
        <end position="212"/>
    </location>
</feature>
<feature type="strand" evidence="17">
    <location>
        <begin position="216"/>
        <end position="223"/>
    </location>
</feature>
<feature type="strand" evidence="17">
    <location>
        <begin position="236"/>
        <end position="246"/>
    </location>
</feature>
<feature type="helix" evidence="17">
    <location>
        <begin position="251"/>
        <end position="253"/>
    </location>
</feature>
<feature type="strand" evidence="17">
    <location>
        <begin position="254"/>
        <end position="259"/>
    </location>
</feature>
<feature type="strand" evidence="17">
    <location>
        <begin position="262"/>
        <end position="267"/>
    </location>
</feature>
<feature type="helix" evidence="17">
    <location>
        <begin position="271"/>
        <end position="288"/>
    </location>
</feature>
<feature type="turn" evidence="17">
    <location>
        <begin position="291"/>
        <end position="295"/>
    </location>
</feature>
<feature type="helix" evidence="17">
    <location>
        <begin position="297"/>
        <end position="300"/>
    </location>
</feature>
<feature type="helix" evidence="17">
    <location>
        <begin position="302"/>
        <end position="304"/>
    </location>
</feature>
<feature type="strand" evidence="17">
    <location>
        <begin position="305"/>
        <end position="309"/>
    </location>
</feature>
<feature type="helix" evidence="17">
    <location>
        <begin position="314"/>
        <end position="323"/>
    </location>
</feature>
<feature type="turn" evidence="17">
    <location>
        <begin position="328"/>
        <end position="331"/>
    </location>
</feature>
<feature type="helix" evidence="17">
    <location>
        <begin position="332"/>
        <end position="339"/>
    </location>
</feature>
<feature type="helix" evidence="17">
    <location>
        <begin position="345"/>
        <end position="347"/>
    </location>
</feature>
<feature type="helix" evidence="17">
    <location>
        <begin position="348"/>
        <end position="361"/>
    </location>
</feature>
<feature type="strand" evidence="17">
    <location>
        <begin position="368"/>
        <end position="376"/>
    </location>
</feature>
<feature type="turn" evidence="17">
    <location>
        <begin position="377"/>
        <end position="379"/>
    </location>
</feature>
<feature type="strand" evidence="17">
    <location>
        <begin position="380"/>
        <end position="387"/>
    </location>
</feature>
<protein>
    <recommendedName>
        <fullName evidence="11">Acylalkylpyrone synthase csyB</fullName>
        <ecNumber evidence="5 6 7 8 9">2.3.1.-</ecNumber>
    </recommendedName>
    <alternativeName>
        <fullName evidence="10">Type III polyketide synthase csyB</fullName>
    </alternativeName>
</protein>
<gene>
    <name evidence="10" type="primary">csyB</name>
    <name type="ORF">AO090701000566</name>
</gene>
<sequence length="397" mass="43079">MIEPLPTEDIPKQSVSIVGIASRCAPHKLGADELEAIARRHYSSTPSLEKMLEINRKTRIDHRYSVFSSDHEHWHRPTIPSFSECDSLFKEYGIPLASAASARAIQDWGGVPDEITHLVAVTCTNTAHPGFDSVLCRKLGLKCNVRRVLLHGIGCGGGISAMRVAHELLLGSTQQGVPARALIVACEVPTVFARSELDIMDKTQDVNVAMCLFGDCAAALVLSNGIGHKASEQRPIWNILNCEPTQFDGTEDIAHFNVHDKGYHAIIDKRIPQLTGKCVPAGFQSLISSTPSLALEEKNYVPSNYGWAVHPGGYAVLVAAQDALGLTADDLRASYDAYRDGGNTISTTIIRILEKLRDEHKHGSNQKDKLVLAAIGHGITLETAILTRPGSSSYLHA</sequence>
<accession>Q2U852</accession>
<accession>Q53U84</accession>
<keyword id="KW-0002">3D-structure</keyword>
<keyword id="KW-0012">Acyltransferase</keyword>
<keyword id="KW-1185">Reference proteome</keyword>
<keyword id="KW-0808">Transferase</keyword>
<organism>
    <name type="scientific">Aspergillus oryzae (strain ATCC 42149 / RIB 40)</name>
    <name type="common">Yellow koji mold</name>
    <dbReference type="NCBI Taxonomy" id="510516"/>
    <lineage>
        <taxon>Eukaryota</taxon>
        <taxon>Fungi</taxon>
        <taxon>Dikarya</taxon>
        <taxon>Ascomycota</taxon>
        <taxon>Pezizomycotina</taxon>
        <taxon>Eurotiomycetes</taxon>
        <taxon>Eurotiomycetidae</taxon>
        <taxon>Eurotiales</taxon>
        <taxon>Aspergillaceae</taxon>
        <taxon>Aspergillus</taxon>
        <taxon>Aspergillus subgen. Circumdati</taxon>
    </lineage>
</organism>
<proteinExistence type="evidence at protein level"/>
<reference key="1">
    <citation type="journal article" date="2005" name="Biochem. Biophys. Res. Commun.">
        <title>Discovery of a novel superfamily of type III polyketide synthases in Aspergillus oryzae.</title>
        <authorList>
            <person name="Seshime Y."/>
            <person name="Juvvadi P.R."/>
            <person name="Fujii I."/>
            <person name="Kitamoto K."/>
        </authorList>
    </citation>
    <scope>NUCLEOTIDE SEQUENCE [GENOMIC DNA]</scope>
    <scope>IDENTIFICATION</scope>
    <scope>INDUCTION</scope>
    <source>
        <strain>ATCC 42149 / RIB 40</strain>
    </source>
</reference>
<reference key="2">
    <citation type="journal article" date="2005" name="Nature">
        <title>Genome sequencing and analysis of Aspergillus oryzae.</title>
        <authorList>
            <person name="Machida M."/>
            <person name="Asai K."/>
            <person name="Sano M."/>
            <person name="Tanaka T."/>
            <person name="Kumagai T."/>
            <person name="Terai G."/>
            <person name="Kusumoto K."/>
            <person name="Arima T."/>
            <person name="Akita O."/>
            <person name="Kashiwagi Y."/>
            <person name="Abe K."/>
            <person name="Gomi K."/>
            <person name="Horiuchi H."/>
            <person name="Kitamoto K."/>
            <person name="Kobayashi T."/>
            <person name="Takeuchi M."/>
            <person name="Denning D.W."/>
            <person name="Galagan J.E."/>
            <person name="Nierman W.C."/>
            <person name="Yu J."/>
            <person name="Archer D.B."/>
            <person name="Bennett J.W."/>
            <person name="Bhatnagar D."/>
            <person name="Cleveland T.E."/>
            <person name="Fedorova N.D."/>
            <person name="Gotoh O."/>
            <person name="Horikawa H."/>
            <person name="Hosoyama A."/>
            <person name="Ichinomiya M."/>
            <person name="Igarashi R."/>
            <person name="Iwashita K."/>
            <person name="Juvvadi P.R."/>
            <person name="Kato M."/>
            <person name="Kato Y."/>
            <person name="Kin T."/>
            <person name="Kokubun A."/>
            <person name="Maeda H."/>
            <person name="Maeyama N."/>
            <person name="Maruyama J."/>
            <person name="Nagasaki H."/>
            <person name="Nakajima T."/>
            <person name="Oda K."/>
            <person name="Okada K."/>
            <person name="Paulsen I."/>
            <person name="Sakamoto K."/>
            <person name="Sawano T."/>
            <person name="Takahashi M."/>
            <person name="Takase K."/>
            <person name="Terabayashi Y."/>
            <person name="Wortman J.R."/>
            <person name="Yamada O."/>
            <person name="Yamagata Y."/>
            <person name="Anazawa H."/>
            <person name="Hata Y."/>
            <person name="Koide Y."/>
            <person name="Komori T."/>
            <person name="Koyama Y."/>
            <person name="Minetoki T."/>
            <person name="Suharnan S."/>
            <person name="Tanaka A."/>
            <person name="Isono K."/>
            <person name="Kuhara S."/>
            <person name="Ogasawara N."/>
            <person name="Kikuchi H."/>
        </authorList>
    </citation>
    <scope>NUCLEOTIDE SEQUENCE [LARGE SCALE GENOMIC DNA]</scope>
    <source>
        <strain>ATCC 42149 / RIB 40</strain>
    </source>
</reference>
<reference key="3">
    <citation type="journal article" date="2010" name="Bioorg. Med. Chem.">
        <title>Identification of csypyrone B1 as the novel product of Aspergillus oryzae type III polyketide synthase CsyB.</title>
        <authorList>
            <person name="Seshime Y."/>
            <person name="Juvvadi P.R."/>
            <person name="Kitamoto K."/>
            <person name="Ebizuka Y."/>
            <person name="Fujii I."/>
        </authorList>
    </citation>
    <scope>FUNCTION</scope>
    <scope>CATALYTIC ACTIVITY</scope>
</reference>
<reference key="4">
    <citation type="journal article" date="2013" name="Bioorg. Med. Chem. Lett.">
        <title>Identification of csypyrone B2 and B3 as the minor products of Aspergillus oryzae type III polyketide synthase CsyB.</title>
        <authorList>
            <person name="Hashimoto M."/>
            <person name="Seshime Y."/>
            <person name="Kitamoto K."/>
            <person name="Uchiyama N."/>
            <person name="Goda Y."/>
            <person name="Fujii I."/>
        </authorList>
    </citation>
    <scope>FUNCTION</scope>
    <scope>CATALYTIC ACTIVITY</scope>
</reference>
<reference key="5">
    <citation type="journal article" date="2013" name="Bioorg. Med. Chem. Lett.">
        <title>Aspergillus oryzae type III polyketide synthase CsyB uses a fatty acyl starter for the biosynthesis of csypyrone B compounds.</title>
        <authorList>
            <person name="Hashimoto M."/>
            <person name="Ishida S."/>
            <person name="Seshime Y."/>
            <person name="Kitamoto K."/>
            <person name="Fujii I."/>
        </authorList>
    </citation>
    <scope>FUNCTION</scope>
    <scope>CATALYTIC ACTIVITY</scope>
</reference>
<reference key="6">
    <citation type="journal article" date="2014" name="Acta Crystallogr. F Struct. Biol. Commun.">
        <title>Expression, purification and crystallization of a fungal type III polyketide synthase that produces the csypyrones.</title>
        <authorList>
            <person name="Yang D."/>
            <person name="Mori T."/>
            <person name="Matsui T."/>
            <person name="Hashimoto M."/>
            <person name="Morita H."/>
            <person name="Fujii I."/>
            <person name="Abe I."/>
        </authorList>
    </citation>
    <scope>CRYSTALLIZATION</scope>
    <scope>FUNCTION</scope>
</reference>
<reference key="7">
    <citation type="journal article" date="2014" name="J. Biol. Chem.">
        <title>Aspergillus oryzae CsyB catalyzes the condensation of two beta-ketoacyl-CoAs to form 3-acetyl-4-hydroxy-6-alkyl-alpha-pyrone.</title>
        <authorList>
            <person name="Hashimoto M."/>
            <person name="Koen T."/>
            <person name="Takahashi H."/>
            <person name="Suda C."/>
            <person name="Kitamoto K."/>
            <person name="Fujii I."/>
        </authorList>
    </citation>
    <scope>FUNCTION</scope>
    <scope>CATALYTIC ACTIVITY</scope>
    <scope>SUBSTRATE SPECIFICITY</scope>
    <scope>BIOPHYSICOCHEMICAL PROPERTIES</scope>
</reference>
<reference evidence="14 15 16" key="8">
    <citation type="journal article" date="2015" name="J. Biol. Chem.">
        <title>Structural basis for the formation of acylalkylpyrones from two beta-ketoacyl units by the fungal type III polyketide synthase CsyB.</title>
        <authorList>
            <person name="Mori T."/>
            <person name="Yang D."/>
            <person name="Matsui T."/>
            <person name="Hashimoto M."/>
            <person name="Morita H."/>
            <person name="Fujii I."/>
            <person name="Abe I."/>
        </authorList>
    </citation>
    <scope>X-RAY CRYSTALLOGRAPHY (1.71 ANGSTROMS) IN COMPLEX WITH COENZYME A</scope>
    <scope>SUBUNIT</scope>
    <scope>FUNCTION</scope>
    <scope>CATALYTIC ACTIVITY</scope>
    <scope>ACTIVE SITE</scope>
    <scope>SUBSTRATE SPECIFICITY</scope>
    <scope>BIOPHYSICOCHEMICAL PROPERTIES</scope>
    <scope>MUTAGENESIS OF ALA-265; ILE-375 AND HIS-377</scope>
</reference>
<evidence type="ECO:0000250" key="1">
    <source>
        <dbReference type="UniProtKB" id="P30074"/>
    </source>
</evidence>
<evidence type="ECO:0000250" key="2">
    <source>
        <dbReference type="UniProtKB" id="Q58VP7"/>
    </source>
</evidence>
<evidence type="ECO:0000255" key="3">
    <source>
        <dbReference type="PROSITE-ProRule" id="PRU10023"/>
    </source>
</evidence>
<evidence type="ECO:0000269" key="4">
    <source>
    </source>
</evidence>
<evidence type="ECO:0000269" key="5">
    <source>
    </source>
</evidence>
<evidence type="ECO:0000269" key="6">
    <source>
    </source>
</evidence>
<evidence type="ECO:0000269" key="7">
    <source>
    </source>
</evidence>
<evidence type="ECO:0000269" key="8">
    <source>
    </source>
</evidence>
<evidence type="ECO:0000269" key="9">
    <source>
    </source>
</evidence>
<evidence type="ECO:0000303" key="10">
    <source>
    </source>
</evidence>
<evidence type="ECO:0000303" key="11">
    <source>
    </source>
</evidence>
<evidence type="ECO:0000305" key="12"/>
<evidence type="ECO:0000305" key="13">
    <source>
    </source>
</evidence>
<evidence type="ECO:0007744" key="14">
    <source>
        <dbReference type="PDB" id="3WXY"/>
    </source>
</evidence>
<evidence type="ECO:0007744" key="15">
    <source>
        <dbReference type="PDB" id="3WXZ"/>
    </source>
</evidence>
<evidence type="ECO:0007744" key="16">
    <source>
        <dbReference type="PDB" id="3WY0"/>
    </source>
</evidence>
<evidence type="ECO:0007829" key="17">
    <source>
        <dbReference type="PDB" id="3WXY"/>
    </source>
</evidence>
<dbReference type="EC" id="2.3.1.-" evidence="5 6 7 8 9"/>
<dbReference type="EMBL" id="AB206759">
    <property type="protein sequence ID" value="BAD97391.1"/>
    <property type="molecule type" value="Genomic_DNA"/>
</dbReference>
<dbReference type="EMBL" id="BA000053">
    <property type="protein sequence ID" value="BAE62263.1"/>
    <property type="molecule type" value="Genomic_DNA"/>
</dbReference>
<dbReference type="PDB" id="3WXY">
    <property type="method" value="X-ray"/>
    <property type="resolution" value="1.71 A"/>
    <property type="chains" value="A/B=1-397"/>
</dbReference>
<dbReference type="PDB" id="3WXZ">
    <property type="method" value="X-ray"/>
    <property type="resolution" value="2.30 A"/>
    <property type="chains" value="A/B=1-397"/>
</dbReference>
<dbReference type="PDB" id="3WY0">
    <property type="method" value="X-ray"/>
    <property type="resolution" value="2.00 A"/>
    <property type="chains" value="A/B=1-397"/>
</dbReference>
<dbReference type="PDBsum" id="3WXY"/>
<dbReference type="PDBsum" id="3WXZ"/>
<dbReference type="PDBsum" id="3WY0"/>
<dbReference type="SMR" id="Q2U852"/>
<dbReference type="STRING" id="510516.Q2U852"/>
<dbReference type="EnsemblFungi" id="BAE62263">
    <property type="protein sequence ID" value="BAE62263"/>
    <property type="gene ID" value="AO090701000566"/>
</dbReference>
<dbReference type="VEuPathDB" id="FungiDB:AO090701000566"/>
<dbReference type="HOGENOM" id="CLU_034992_1_1_1"/>
<dbReference type="OMA" id="HGWQDRM"/>
<dbReference type="EvolutionaryTrace" id="Q2U852"/>
<dbReference type="Proteomes" id="UP000006564">
    <property type="component" value="Chromosome 5"/>
</dbReference>
<dbReference type="GO" id="GO:0034083">
    <property type="term" value="C:type III polyketide synthase complex"/>
    <property type="evidence" value="ECO:0000314"/>
    <property type="project" value="AspGD"/>
</dbReference>
<dbReference type="GO" id="GO:0016210">
    <property type="term" value="F:naringenin-chalcone synthase activity"/>
    <property type="evidence" value="ECO:0000247"/>
    <property type="project" value="AspGD"/>
</dbReference>
<dbReference type="GO" id="GO:0090439">
    <property type="term" value="F:tetraketide alpha-pyrone synthase activity"/>
    <property type="evidence" value="ECO:0000314"/>
    <property type="project" value="AspGD"/>
</dbReference>
<dbReference type="GO" id="GO:0030639">
    <property type="term" value="P:polyketide biosynthetic process"/>
    <property type="evidence" value="ECO:0000314"/>
    <property type="project" value="AspGD"/>
</dbReference>
<dbReference type="FunFam" id="3.40.47.10:FF:000088">
    <property type="entry name" value="Putative chalcone synthase"/>
    <property type="match status" value="1"/>
</dbReference>
<dbReference type="Gene3D" id="3.40.47.10">
    <property type="match status" value="2"/>
</dbReference>
<dbReference type="InterPro" id="IPR012328">
    <property type="entry name" value="Chalcone/stilbene_synt_C"/>
</dbReference>
<dbReference type="InterPro" id="IPR001099">
    <property type="entry name" value="Chalcone/stilbene_synt_N"/>
</dbReference>
<dbReference type="InterPro" id="IPR011141">
    <property type="entry name" value="Polyketide_synthase_type-III"/>
</dbReference>
<dbReference type="InterPro" id="IPR016039">
    <property type="entry name" value="Thiolase-like"/>
</dbReference>
<dbReference type="PANTHER" id="PTHR11877">
    <property type="entry name" value="HYDROXYMETHYLGLUTARYL-COA SYNTHASE"/>
    <property type="match status" value="1"/>
</dbReference>
<dbReference type="PANTHER" id="PTHR11877:SF46">
    <property type="entry name" value="TYPE III POLYKETIDE SYNTHASE A"/>
    <property type="match status" value="1"/>
</dbReference>
<dbReference type="Pfam" id="PF02797">
    <property type="entry name" value="Chal_sti_synt_C"/>
    <property type="match status" value="1"/>
</dbReference>
<dbReference type="Pfam" id="PF00195">
    <property type="entry name" value="Chal_sti_synt_N"/>
    <property type="match status" value="1"/>
</dbReference>
<dbReference type="PIRSF" id="PIRSF000451">
    <property type="entry name" value="PKS_III"/>
    <property type="match status" value="1"/>
</dbReference>
<dbReference type="SUPFAM" id="SSF53901">
    <property type="entry name" value="Thiolase-like"/>
    <property type="match status" value="2"/>
</dbReference>
<name>CSYB_ASPOR</name>
<comment type="function">
    <text evidence="5 6 7 8 9 13">Acylalkylpyrone synthase that catalyzes not only the polyketide chain elongation but also the one-pot condensation of two beta-ketoacyl units to produce the 3-acyl-4-hydroxy-6-alkyl-alpha-pyrone (AcAP) scaffold, a precursor of csypyrone B (Probable) (PubMed:20471846, PubMed:23290452, PubMed:24011646, PubMed:24895122, PubMed:25564614). The enzyme reaction is initiated by the loading of acetoacetyl-CoA onto Cys-155, and subsequent thioester bond cleavage by the nucleophilic water generates the beta-keto acid intermediate, which is placed within a pocket (PubMed:25564614). The second beta-ketoacyl unit is then produced by polyketide chain elongation of fatty acyl-CoA with one molecule of malonyl-CoA, and the condensation with the beta-ketoacid generates the final products (PubMed:24895122, PubMed:25564614). Csypyrone B1 is the major product and contains a propanoic acid side-chain, whereas csypyrones B2 and B3 are minor compounds that contain butyric or pentanoic acid side-chains, respectively (PubMed:20471846, PubMed:23290452, PubMed:24011646).</text>
</comment>
<comment type="biophysicochemical properties">
    <kinetics>
        <KM evidence="8">14.4 uM for acetoacetyl-CoA</KM>
        <KM evidence="9">6.4 mM for C(4)-diketide-N-acetylcysteamine</KM>
        <KM evidence="9">3.1 mM for C(5)-diketide-N-acetylcysteamine</KM>
        <KM evidence="9">6.8 mM for C(6)-diketide-N-acetylcysteamine</KM>
    </kinetics>
</comment>
<comment type="subunit">
    <text evidence="9">Homodimer.</text>
</comment>
<comment type="induction">
    <text evidence="4">Expressed during 1-3 days of culture in DPY medium.</text>
</comment>
<comment type="similarity">
    <text evidence="12">Belongs to the thiolase-like superfamily. Chalcone/stilbene synthases family.</text>
</comment>